<protein>
    <recommendedName>
        <fullName evidence="1">Large ribosomal subunit protein bL35</fullName>
    </recommendedName>
    <alternativeName>
        <fullName evidence="3">50S ribosomal protein L35</fullName>
    </alternativeName>
</protein>
<comment type="similarity">
    <text evidence="1">Belongs to the bacterial ribosomal protein bL35 family.</text>
</comment>
<accession>Q8DYU0</accession>
<keyword id="KW-1185">Reference proteome</keyword>
<keyword id="KW-0687">Ribonucleoprotein</keyword>
<keyword id="KW-0689">Ribosomal protein</keyword>
<organism>
    <name type="scientific">Streptococcus agalactiae serotype V (strain ATCC BAA-611 / 2603 V/R)</name>
    <dbReference type="NCBI Taxonomy" id="208435"/>
    <lineage>
        <taxon>Bacteria</taxon>
        <taxon>Bacillati</taxon>
        <taxon>Bacillota</taxon>
        <taxon>Bacilli</taxon>
        <taxon>Lactobacillales</taxon>
        <taxon>Streptococcaceae</taxon>
        <taxon>Streptococcus</taxon>
    </lineage>
</organism>
<name>RL35_STRA5</name>
<feature type="chain" id="PRO_0000177428" description="Large ribosomal subunit protein bL35">
    <location>
        <begin position="1"/>
        <end position="66"/>
    </location>
</feature>
<feature type="region of interest" description="Disordered" evidence="2">
    <location>
        <begin position="1"/>
        <end position="21"/>
    </location>
</feature>
<feature type="compositionally biased region" description="Basic residues" evidence="2">
    <location>
        <begin position="1"/>
        <end position="16"/>
    </location>
</feature>
<reference key="1">
    <citation type="journal article" date="2002" name="Proc. Natl. Acad. Sci. U.S.A.">
        <title>Complete genome sequence and comparative genomic analysis of an emerging human pathogen, serotype V Streptococcus agalactiae.</title>
        <authorList>
            <person name="Tettelin H."/>
            <person name="Masignani V."/>
            <person name="Cieslewicz M.J."/>
            <person name="Eisen J.A."/>
            <person name="Peterson S.N."/>
            <person name="Wessels M.R."/>
            <person name="Paulsen I.T."/>
            <person name="Nelson K.E."/>
            <person name="Margarit I."/>
            <person name="Read T.D."/>
            <person name="Madoff L.C."/>
            <person name="Wolf A.M."/>
            <person name="Beanan M.J."/>
            <person name="Brinkac L.M."/>
            <person name="Daugherty S.C."/>
            <person name="DeBoy R.T."/>
            <person name="Durkin A.S."/>
            <person name="Kolonay J.F."/>
            <person name="Madupu R."/>
            <person name="Lewis M.R."/>
            <person name="Radune D."/>
            <person name="Fedorova N.B."/>
            <person name="Scanlan D."/>
            <person name="Khouri H.M."/>
            <person name="Mulligan S."/>
            <person name="Carty H.A."/>
            <person name="Cline R.T."/>
            <person name="Van Aken S.E."/>
            <person name="Gill J."/>
            <person name="Scarselli M."/>
            <person name="Mora M."/>
            <person name="Iacobini E.T."/>
            <person name="Brettoni C."/>
            <person name="Galli G."/>
            <person name="Mariani M."/>
            <person name="Vegni F."/>
            <person name="Maione D."/>
            <person name="Rinaudo D."/>
            <person name="Rappuoli R."/>
            <person name="Telford J.L."/>
            <person name="Kasper D.L."/>
            <person name="Grandi G."/>
            <person name="Fraser C.M."/>
        </authorList>
    </citation>
    <scope>NUCLEOTIDE SEQUENCE [LARGE SCALE GENOMIC DNA]</scope>
    <source>
        <strain>ATCC BAA-611 / 2603 V/R</strain>
    </source>
</reference>
<dbReference type="EMBL" id="AE009948">
    <property type="protein sequence ID" value="AAN00254.1"/>
    <property type="molecule type" value="Genomic_DNA"/>
</dbReference>
<dbReference type="RefSeq" id="NP_688381.1">
    <property type="nucleotide sequence ID" value="NC_004116.1"/>
</dbReference>
<dbReference type="RefSeq" id="WP_001125940.1">
    <property type="nucleotide sequence ID" value="NC_004116.1"/>
</dbReference>
<dbReference type="SMR" id="Q8DYU0"/>
<dbReference type="STRING" id="208435.SAG1383"/>
<dbReference type="KEGG" id="sag:SAG1383"/>
<dbReference type="PATRIC" id="fig|208435.3.peg.1391"/>
<dbReference type="HOGENOM" id="CLU_169643_3_0_9"/>
<dbReference type="OrthoDB" id="47476at2"/>
<dbReference type="Proteomes" id="UP000000821">
    <property type="component" value="Chromosome"/>
</dbReference>
<dbReference type="GO" id="GO:0022625">
    <property type="term" value="C:cytosolic large ribosomal subunit"/>
    <property type="evidence" value="ECO:0007669"/>
    <property type="project" value="TreeGrafter"/>
</dbReference>
<dbReference type="GO" id="GO:0003735">
    <property type="term" value="F:structural constituent of ribosome"/>
    <property type="evidence" value="ECO:0007669"/>
    <property type="project" value="InterPro"/>
</dbReference>
<dbReference type="GO" id="GO:0006412">
    <property type="term" value="P:translation"/>
    <property type="evidence" value="ECO:0007669"/>
    <property type="project" value="UniProtKB-UniRule"/>
</dbReference>
<dbReference type="FunFam" id="4.10.410.60:FF:000001">
    <property type="entry name" value="50S ribosomal protein L35"/>
    <property type="match status" value="1"/>
</dbReference>
<dbReference type="Gene3D" id="4.10.410.60">
    <property type="match status" value="1"/>
</dbReference>
<dbReference type="HAMAP" id="MF_00514">
    <property type="entry name" value="Ribosomal_bL35"/>
    <property type="match status" value="1"/>
</dbReference>
<dbReference type="InterPro" id="IPR001706">
    <property type="entry name" value="Ribosomal_bL35"/>
</dbReference>
<dbReference type="InterPro" id="IPR021137">
    <property type="entry name" value="Ribosomal_bL35-like"/>
</dbReference>
<dbReference type="InterPro" id="IPR018265">
    <property type="entry name" value="Ribosomal_bL35_CS"/>
</dbReference>
<dbReference type="InterPro" id="IPR037229">
    <property type="entry name" value="Ribosomal_bL35_sf"/>
</dbReference>
<dbReference type="NCBIfam" id="TIGR00001">
    <property type="entry name" value="rpmI_bact"/>
    <property type="match status" value="1"/>
</dbReference>
<dbReference type="PANTHER" id="PTHR33343">
    <property type="entry name" value="54S RIBOSOMAL PROTEIN BL35M"/>
    <property type="match status" value="1"/>
</dbReference>
<dbReference type="PANTHER" id="PTHR33343:SF1">
    <property type="entry name" value="LARGE RIBOSOMAL SUBUNIT PROTEIN BL35M"/>
    <property type="match status" value="1"/>
</dbReference>
<dbReference type="Pfam" id="PF01632">
    <property type="entry name" value="Ribosomal_L35p"/>
    <property type="match status" value="1"/>
</dbReference>
<dbReference type="PRINTS" id="PR00064">
    <property type="entry name" value="RIBOSOMALL35"/>
</dbReference>
<dbReference type="SUPFAM" id="SSF143034">
    <property type="entry name" value="L35p-like"/>
    <property type="match status" value="1"/>
</dbReference>
<dbReference type="PROSITE" id="PS00936">
    <property type="entry name" value="RIBOSOMAL_L35"/>
    <property type="match status" value="1"/>
</dbReference>
<sequence>MPKQKTHRASAKRFKRTGSGGLKRFRAFTSHRFHGKTKKQRRHLRKATMVSSGDFKRIKAMLTRLK</sequence>
<evidence type="ECO:0000255" key="1">
    <source>
        <dbReference type="HAMAP-Rule" id="MF_00514"/>
    </source>
</evidence>
<evidence type="ECO:0000256" key="2">
    <source>
        <dbReference type="SAM" id="MobiDB-lite"/>
    </source>
</evidence>
<evidence type="ECO:0000305" key="3"/>
<proteinExistence type="inferred from homology"/>
<gene>
    <name evidence="1" type="primary">rpmI</name>
    <name type="ordered locus">SAG1383</name>
</gene>